<protein>
    <recommendedName>
        <fullName evidence="1">3-isopropylmalate dehydratase small subunit</fullName>
        <ecNumber evidence="1">4.2.1.33</ecNumber>
    </recommendedName>
    <alternativeName>
        <fullName evidence="1">Alpha-IPM isomerase</fullName>
        <shortName evidence="1">IPMI</shortName>
    </alternativeName>
    <alternativeName>
        <fullName evidence="1">Isopropylmalate isomerase</fullName>
    </alternativeName>
</protein>
<comment type="function">
    <text evidence="1">Catalyzes the isomerization between 2-isopropylmalate and 3-isopropylmalate, via the formation of 2-isopropylmaleate.</text>
</comment>
<comment type="catalytic activity">
    <reaction evidence="1">
        <text>(2R,3S)-3-isopropylmalate = (2S)-2-isopropylmalate</text>
        <dbReference type="Rhea" id="RHEA:32287"/>
        <dbReference type="ChEBI" id="CHEBI:1178"/>
        <dbReference type="ChEBI" id="CHEBI:35121"/>
        <dbReference type="EC" id="4.2.1.33"/>
    </reaction>
</comment>
<comment type="pathway">
    <text evidence="1">Amino-acid biosynthesis; L-leucine biosynthesis; L-leucine from 3-methyl-2-oxobutanoate: step 2/4.</text>
</comment>
<comment type="subunit">
    <text evidence="1">Heterodimer of LeuC and LeuD.</text>
</comment>
<comment type="similarity">
    <text evidence="1">Belongs to the LeuD family. LeuD type 1 subfamily.</text>
</comment>
<name>LEUD_SALAR</name>
<proteinExistence type="inferred from homology"/>
<feature type="chain" id="PRO_1000084263" description="3-isopropylmalate dehydratase small subunit">
    <location>
        <begin position="1"/>
        <end position="201"/>
    </location>
</feature>
<accession>A9MQE1</accession>
<evidence type="ECO:0000255" key="1">
    <source>
        <dbReference type="HAMAP-Rule" id="MF_01031"/>
    </source>
</evidence>
<reference key="1">
    <citation type="submission" date="2007-11" db="EMBL/GenBank/DDBJ databases">
        <authorList>
            <consortium name="The Salmonella enterica serovar Arizonae Genome Sequencing Project"/>
            <person name="McClelland M."/>
            <person name="Sanderson E.K."/>
            <person name="Porwollik S."/>
            <person name="Spieth J."/>
            <person name="Clifton W.S."/>
            <person name="Fulton R."/>
            <person name="Chunyan W."/>
            <person name="Wollam A."/>
            <person name="Shah N."/>
            <person name="Pepin K."/>
            <person name="Bhonagiri V."/>
            <person name="Nash W."/>
            <person name="Johnson M."/>
            <person name="Thiruvilangam P."/>
            <person name="Wilson R."/>
        </authorList>
    </citation>
    <scope>NUCLEOTIDE SEQUENCE [LARGE SCALE GENOMIC DNA]</scope>
    <source>
        <strain>ATCC BAA-731 / CDC346-86 / RSK2980</strain>
    </source>
</reference>
<organism>
    <name type="scientific">Salmonella arizonae (strain ATCC BAA-731 / CDC346-86 / RSK2980)</name>
    <dbReference type="NCBI Taxonomy" id="41514"/>
    <lineage>
        <taxon>Bacteria</taxon>
        <taxon>Pseudomonadati</taxon>
        <taxon>Pseudomonadota</taxon>
        <taxon>Gammaproteobacteria</taxon>
        <taxon>Enterobacterales</taxon>
        <taxon>Enterobacteriaceae</taxon>
        <taxon>Salmonella</taxon>
    </lineage>
</organism>
<sequence length="201" mass="22465">MAEKFIQHTGLVVPLDAANVDTDAIIPKQFLQKVTRTGFGAHLFNDWRFLDEQGQQPNPAFVLNFPEYQGASILLARENFGCGSSREHAPWALTDYGFKVVIAPSFADIFYGNSFNNQLLPVKLSEEAVDELFALAQANPGIHFEVDLAAQVVKAGDKRYPFEIDAFRRHCMMNGLDSIGLTLQHEDAIAAYENKQPAFMR</sequence>
<gene>
    <name evidence="1" type="primary">leuD</name>
    <name type="ordered locus">SARI_02892</name>
</gene>
<keyword id="KW-0028">Amino-acid biosynthesis</keyword>
<keyword id="KW-0100">Branched-chain amino acid biosynthesis</keyword>
<keyword id="KW-0432">Leucine biosynthesis</keyword>
<keyword id="KW-0456">Lyase</keyword>
<keyword id="KW-1185">Reference proteome</keyword>
<dbReference type="EC" id="4.2.1.33" evidence="1"/>
<dbReference type="EMBL" id="CP000880">
    <property type="protein sequence ID" value="ABX22739.1"/>
    <property type="molecule type" value="Genomic_DNA"/>
</dbReference>
<dbReference type="SMR" id="A9MQE1"/>
<dbReference type="STRING" id="41514.SARI_02892"/>
<dbReference type="KEGG" id="ses:SARI_02892"/>
<dbReference type="HOGENOM" id="CLU_081378_0_3_6"/>
<dbReference type="UniPathway" id="UPA00048">
    <property type="reaction ID" value="UER00071"/>
</dbReference>
<dbReference type="Proteomes" id="UP000002084">
    <property type="component" value="Chromosome"/>
</dbReference>
<dbReference type="GO" id="GO:0009316">
    <property type="term" value="C:3-isopropylmalate dehydratase complex"/>
    <property type="evidence" value="ECO:0007669"/>
    <property type="project" value="InterPro"/>
</dbReference>
<dbReference type="GO" id="GO:0003861">
    <property type="term" value="F:3-isopropylmalate dehydratase activity"/>
    <property type="evidence" value="ECO:0007669"/>
    <property type="project" value="UniProtKB-UniRule"/>
</dbReference>
<dbReference type="GO" id="GO:0009098">
    <property type="term" value="P:L-leucine biosynthetic process"/>
    <property type="evidence" value="ECO:0007669"/>
    <property type="project" value="UniProtKB-UniRule"/>
</dbReference>
<dbReference type="CDD" id="cd01577">
    <property type="entry name" value="IPMI_Swivel"/>
    <property type="match status" value="1"/>
</dbReference>
<dbReference type="FunFam" id="3.20.19.10:FF:000003">
    <property type="entry name" value="3-isopropylmalate dehydratase small subunit"/>
    <property type="match status" value="1"/>
</dbReference>
<dbReference type="Gene3D" id="3.20.19.10">
    <property type="entry name" value="Aconitase, domain 4"/>
    <property type="match status" value="1"/>
</dbReference>
<dbReference type="HAMAP" id="MF_01031">
    <property type="entry name" value="LeuD_type1"/>
    <property type="match status" value="1"/>
</dbReference>
<dbReference type="InterPro" id="IPR004431">
    <property type="entry name" value="3-IsopropMal_deHydase_ssu"/>
</dbReference>
<dbReference type="InterPro" id="IPR015928">
    <property type="entry name" value="Aconitase/3IPM_dehydase_swvl"/>
</dbReference>
<dbReference type="InterPro" id="IPR000573">
    <property type="entry name" value="AconitaseA/IPMdHydase_ssu_swvl"/>
</dbReference>
<dbReference type="InterPro" id="IPR033940">
    <property type="entry name" value="IPMI_Swivel"/>
</dbReference>
<dbReference type="InterPro" id="IPR050075">
    <property type="entry name" value="LeuD"/>
</dbReference>
<dbReference type="NCBIfam" id="TIGR00171">
    <property type="entry name" value="leuD"/>
    <property type="match status" value="1"/>
</dbReference>
<dbReference type="NCBIfam" id="NF002458">
    <property type="entry name" value="PRK01641.1"/>
    <property type="match status" value="1"/>
</dbReference>
<dbReference type="PANTHER" id="PTHR43345:SF5">
    <property type="entry name" value="3-ISOPROPYLMALATE DEHYDRATASE SMALL SUBUNIT"/>
    <property type="match status" value="1"/>
</dbReference>
<dbReference type="PANTHER" id="PTHR43345">
    <property type="entry name" value="3-ISOPROPYLMALATE DEHYDRATASE SMALL SUBUNIT 2-RELATED-RELATED"/>
    <property type="match status" value="1"/>
</dbReference>
<dbReference type="Pfam" id="PF00694">
    <property type="entry name" value="Aconitase_C"/>
    <property type="match status" value="1"/>
</dbReference>
<dbReference type="SUPFAM" id="SSF52016">
    <property type="entry name" value="LeuD/IlvD-like"/>
    <property type="match status" value="1"/>
</dbReference>